<keyword id="KW-0521">NADP</keyword>
<keyword id="KW-0560">Oxidoreductase</keyword>
<keyword id="KW-0627">Porphyrin biosynthesis</keyword>
<keyword id="KW-1185">Reference proteome</keyword>
<accession>P64329</accession>
<accession>A0A1R3XVM9</accession>
<accession>Q11139</accession>
<accession>X2BFA0</accession>
<gene>
    <name evidence="1" type="primary">hemA</name>
    <name type="ordered locus">BQ2027_MB0521</name>
</gene>
<protein>
    <recommendedName>
        <fullName evidence="1">Glutamyl-tRNA reductase</fullName>
        <shortName evidence="1">GluTR</shortName>
        <ecNumber evidence="1">1.2.1.70</ecNumber>
    </recommendedName>
</protein>
<evidence type="ECO:0000255" key="1">
    <source>
        <dbReference type="HAMAP-Rule" id="MF_00087"/>
    </source>
</evidence>
<evidence type="ECO:0000256" key="2">
    <source>
        <dbReference type="SAM" id="MobiDB-lite"/>
    </source>
</evidence>
<organism>
    <name type="scientific">Mycobacterium bovis (strain ATCC BAA-935 / AF2122/97)</name>
    <dbReference type="NCBI Taxonomy" id="233413"/>
    <lineage>
        <taxon>Bacteria</taxon>
        <taxon>Bacillati</taxon>
        <taxon>Actinomycetota</taxon>
        <taxon>Actinomycetes</taxon>
        <taxon>Mycobacteriales</taxon>
        <taxon>Mycobacteriaceae</taxon>
        <taxon>Mycobacterium</taxon>
        <taxon>Mycobacterium tuberculosis complex</taxon>
    </lineage>
</organism>
<feature type="chain" id="PRO_0000114043" description="Glutamyl-tRNA reductase">
    <location>
        <begin position="1"/>
        <end position="468"/>
    </location>
</feature>
<feature type="region of interest" description="Disordered" evidence="2">
    <location>
        <begin position="443"/>
        <end position="468"/>
    </location>
</feature>
<feature type="compositionally biased region" description="Polar residues" evidence="2">
    <location>
        <begin position="458"/>
        <end position="468"/>
    </location>
</feature>
<feature type="active site" description="Nucleophile" evidence="1">
    <location>
        <position position="50"/>
    </location>
</feature>
<feature type="binding site" evidence="1">
    <location>
        <begin position="49"/>
        <end position="52"/>
    </location>
    <ligand>
        <name>substrate</name>
    </ligand>
</feature>
<feature type="binding site" evidence="1">
    <location>
        <position position="109"/>
    </location>
    <ligand>
        <name>substrate</name>
    </ligand>
</feature>
<feature type="binding site" evidence="1">
    <location>
        <begin position="114"/>
        <end position="116"/>
    </location>
    <ligand>
        <name>substrate</name>
    </ligand>
</feature>
<feature type="binding site" evidence="1">
    <location>
        <position position="120"/>
    </location>
    <ligand>
        <name>substrate</name>
    </ligand>
</feature>
<feature type="binding site" evidence="1">
    <location>
        <begin position="189"/>
        <end position="194"/>
    </location>
    <ligand>
        <name>NADP(+)</name>
        <dbReference type="ChEBI" id="CHEBI:58349"/>
    </ligand>
</feature>
<feature type="site" description="Important for activity" evidence="1">
    <location>
        <position position="99"/>
    </location>
</feature>
<sequence length="468" mass="49361">MSVLLFGVSHRSAPVVVLEQLSIDESDQVKIIDRVLASPLVTEAMVLSTCNRVEVYAVVDAFHGGLSVIGQVLAEHSGMSMGELTKYAYVRYSEAAVEHLFAVASGLDSAVIGEQQVLGQVRRAYAVAESNRTVGRVLHELAQRALSVGKRVHSETAIDAAGASVVSVALGMAERKLGSLAGTTAVVIGAGAMGALSAVHLTRAGVGHIQVLNRSLSRAQRLARRIRESGVPAEALALDRLANVLADADVVVSCTGAVRPVVSLADVHHALAAARRDEATRPLVICDLGMPRDVDPAVARLPCVWVVDVDSVQHEPSAHAAAADVEAARHIVAAEVASYLVGQRMAEVTPTVTALRQRAAEVVEAELLRLDNRLPGLQSVQREEVARTVRRVVDKLLHAPTVRIKQLASAPGGDSYAEALRELFELDQTAVDAVATAGELPVVPSGFDAESRRGGGDMQSSPKRSPSN</sequence>
<reference key="1">
    <citation type="journal article" date="2003" name="Proc. Natl. Acad. Sci. U.S.A.">
        <title>The complete genome sequence of Mycobacterium bovis.</title>
        <authorList>
            <person name="Garnier T."/>
            <person name="Eiglmeier K."/>
            <person name="Camus J.-C."/>
            <person name="Medina N."/>
            <person name="Mansoor H."/>
            <person name="Pryor M."/>
            <person name="Duthoy S."/>
            <person name="Grondin S."/>
            <person name="Lacroix C."/>
            <person name="Monsempe C."/>
            <person name="Simon S."/>
            <person name="Harris B."/>
            <person name="Atkin R."/>
            <person name="Doggett J."/>
            <person name="Mayes R."/>
            <person name="Keating L."/>
            <person name="Wheeler P.R."/>
            <person name="Parkhill J."/>
            <person name="Barrell B.G."/>
            <person name="Cole S.T."/>
            <person name="Gordon S.V."/>
            <person name="Hewinson R.G."/>
        </authorList>
    </citation>
    <scope>NUCLEOTIDE SEQUENCE [LARGE SCALE GENOMIC DNA]</scope>
    <source>
        <strain>ATCC BAA-935 / AF2122/97</strain>
    </source>
</reference>
<reference key="2">
    <citation type="journal article" date="2017" name="Genome Announc.">
        <title>Updated reference genome sequence and annotation of Mycobacterium bovis AF2122/97.</title>
        <authorList>
            <person name="Malone K.M."/>
            <person name="Farrell D."/>
            <person name="Stuber T.P."/>
            <person name="Schubert O.T."/>
            <person name="Aebersold R."/>
            <person name="Robbe-Austerman S."/>
            <person name="Gordon S.V."/>
        </authorList>
    </citation>
    <scope>NUCLEOTIDE SEQUENCE [LARGE SCALE GENOMIC DNA]</scope>
    <scope>GENOME REANNOTATION</scope>
    <source>
        <strain>ATCC BAA-935 / AF2122/97</strain>
    </source>
</reference>
<name>HEM1_MYCBO</name>
<dbReference type="EC" id="1.2.1.70" evidence="1"/>
<dbReference type="EMBL" id="LT708304">
    <property type="protein sequence ID" value="SIT99117.1"/>
    <property type="molecule type" value="Genomic_DNA"/>
</dbReference>
<dbReference type="RefSeq" id="NP_854184.1">
    <property type="nucleotide sequence ID" value="NC_002945.3"/>
</dbReference>
<dbReference type="RefSeq" id="WP_003402699.1">
    <property type="nucleotide sequence ID" value="NC_002945.4"/>
</dbReference>
<dbReference type="SMR" id="P64329"/>
<dbReference type="PATRIC" id="fig|233413.5.peg.568"/>
<dbReference type="UniPathway" id="UPA00251">
    <property type="reaction ID" value="UER00316"/>
</dbReference>
<dbReference type="Proteomes" id="UP000001419">
    <property type="component" value="Chromosome"/>
</dbReference>
<dbReference type="GO" id="GO:0008883">
    <property type="term" value="F:glutamyl-tRNA reductase activity"/>
    <property type="evidence" value="ECO:0007669"/>
    <property type="project" value="UniProtKB-UniRule"/>
</dbReference>
<dbReference type="GO" id="GO:0050661">
    <property type="term" value="F:NADP binding"/>
    <property type="evidence" value="ECO:0007669"/>
    <property type="project" value="InterPro"/>
</dbReference>
<dbReference type="GO" id="GO:0019353">
    <property type="term" value="P:protoporphyrinogen IX biosynthetic process from glutamate"/>
    <property type="evidence" value="ECO:0007669"/>
    <property type="project" value="TreeGrafter"/>
</dbReference>
<dbReference type="CDD" id="cd05213">
    <property type="entry name" value="NAD_bind_Glutamyl_tRNA_reduct"/>
    <property type="match status" value="1"/>
</dbReference>
<dbReference type="FunFam" id="3.30.460.30:FF:000001">
    <property type="entry name" value="Glutamyl-tRNA reductase"/>
    <property type="match status" value="1"/>
</dbReference>
<dbReference type="Gene3D" id="3.30.460.30">
    <property type="entry name" value="Glutamyl-tRNA reductase, N-terminal domain"/>
    <property type="match status" value="1"/>
</dbReference>
<dbReference type="Gene3D" id="3.40.50.720">
    <property type="entry name" value="NAD(P)-binding Rossmann-like Domain"/>
    <property type="match status" value="1"/>
</dbReference>
<dbReference type="HAMAP" id="MF_00087">
    <property type="entry name" value="Glu_tRNA_reductase"/>
    <property type="match status" value="1"/>
</dbReference>
<dbReference type="InterPro" id="IPR000343">
    <property type="entry name" value="4pyrrol_synth_GluRdtase"/>
</dbReference>
<dbReference type="InterPro" id="IPR015896">
    <property type="entry name" value="4pyrrol_synth_GluRdtase_dimer"/>
</dbReference>
<dbReference type="InterPro" id="IPR015895">
    <property type="entry name" value="4pyrrol_synth_GluRdtase_N"/>
</dbReference>
<dbReference type="InterPro" id="IPR018214">
    <property type="entry name" value="GluRdtase_CS"/>
</dbReference>
<dbReference type="InterPro" id="IPR036453">
    <property type="entry name" value="GluRdtase_dimer_dom_sf"/>
</dbReference>
<dbReference type="InterPro" id="IPR036343">
    <property type="entry name" value="GluRdtase_N_sf"/>
</dbReference>
<dbReference type="InterPro" id="IPR036291">
    <property type="entry name" value="NAD(P)-bd_dom_sf"/>
</dbReference>
<dbReference type="InterPro" id="IPR006151">
    <property type="entry name" value="Shikm_DH/Glu-tRNA_Rdtase"/>
</dbReference>
<dbReference type="NCBIfam" id="TIGR01035">
    <property type="entry name" value="hemA"/>
    <property type="match status" value="1"/>
</dbReference>
<dbReference type="NCBIfam" id="NF000744">
    <property type="entry name" value="PRK00045.1-3"/>
    <property type="match status" value="1"/>
</dbReference>
<dbReference type="PANTHER" id="PTHR43013">
    <property type="entry name" value="GLUTAMYL-TRNA REDUCTASE"/>
    <property type="match status" value="1"/>
</dbReference>
<dbReference type="PANTHER" id="PTHR43013:SF1">
    <property type="entry name" value="GLUTAMYL-TRNA REDUCTASE"/>
    <property type="match status" value="1"/>
</dbReference>
<dbReference type="Pfam" id="PF00745">
    <property type="entry name" value="GlutR_dimer"/>
    <property type="match status" value="1"/>
</dbReference>
<dbReference type="Pfam" id="PF05201">
    <property type="entry name" value="GlutR_N"/>
    <property type="match status" value="1"/>
</dbReference>
<dbReference type="Pfam" id="PF01488">
    <property type="entry name" value="Shikimate_DH"/>
    <property type="match status" value="1"/>
</dbReference>
<dbReference type="PIRSF" id="PIRSF000445">
    <property type="entry name" value="4pyrrol_synth_GluRdtase"/>
    <property type="match status" value="1"/>
</dbReference>
<dbReference type="SUPFAM" id="SSF69742">
    <property type="entry name" value="Glutamyl tRNA-reductase catalytic, N-terminal domain"/>
    <property type="match status" value="1"/>
</dbReference>
<dbReference type="SUPFAM" id="SSF69075">
    <property type="entry name" value="Glutamyl tRNA-reductase dimerization domain"/>
    <property type="match status" value="1"/>
</dbReference>
<dbReference type="SUPFAM" id="SSF51735">
    <property type="entry name" value="NAD(P)-binding Rossmann-fold domains"/>
    <property type="match status" value="1"/>
</dbReference>
<dbReference type="PROSITE" id="PS00747">
    <property type="entry name" value="GLUTR"/>
    <property type="match status" value="1"/>
</dbReference>
<proteinExistence type="inferred from homology"/>
<comment type="function">
    <text evidence="1">Catalyzes the NADPH-dependent reduction of glutamyl-tRNA(Glu) to glutamate 1-semialdehyde (GSA).</text>
</comment>
<comment type="catalytic activity">
    <reaction evidence="1">
        <text>(S)-4-amino-5-oxopentanoate + tRNA(Glu) + NADP(+) = L-glutamyl-tRNA(Glu) + NADPH + H(+)</text>
        <dbReference type="Rhea" id="RHEA:12344"/>
        <dbReference type="Rhea" id="RHEA-COMP:9663"/>
        <dbReference type="Rhea" id="RHEA-COMP:9680"/>
        <dbReference type="ChEBI" id="CHEBI:15378"/>
        <dbReference type="ChEBI" id="CHEBI:57501"/>
        <dbReference type="ChEBI" id="CHEBI:57783"/>
        <dbReference type="ChEBI" id="CHEBI:58349"/>
        <dbReference type="ChEBI" id="CHEBI:78442"/>
        <dbReference type="ChEBI" id="CHEBI:78520"/>
        <dbReference type="EC" id="1.2.1.70"/>
    </reaction>
</comment>
<comment type="pathway">
    <text evidence="1">Porphyrin-containing compound metabolism; protoporphyrin-IX biosynthesis; 5-aminolevulinate from L-glutamyl-tRNA(Glu): step 1/2.</text>
</comment>
<comment type="subunit">
    <text evidence="1">Homodimer.</text>
</comment>
<comment type="domain">
    <text evidence="1">Possesses an unusual extended V-shaped dimeric structure with each monomer consisting of three distinct domains arranged along a curved 'spinal' alpha-helix. The N-terminal catalytic domain specifically recognizes the glutamate moiety of the substrate. The second domain is the NADPH-binding domain, and the third C-terminal domain is responsible for dimerization.</text>
</comment>
<comment type="miscellaneous">
    <text evidence="1">During catalysis, the active site Cys acts as a nucleophile attacking the alpha-carbonyl group of tRNA-bound glutamate with the formation of a thioester intermediate between enzyme and glutamate, and the concomitant release of tRNA(Glu). The thioester intermediate is finally reduced by direct hydride transfer from NADPH, to form the product GSA.</text>
</comment>
<comment type="similarity">
    <text evidence="1">Belongs to the glutamyl-tRNA reductase family.</text>
</comment>